<comment type="function">
    <text>One of the primary rRNA binding proteins, it binds directly to 16S rRNA where it helps nucleate assembly of the platform of the 30S subunit by binding and bridging several RNA helices of the 16S rRNA.</text>
</comment>
<comment type="function">
    <text evidence="2">Forms an intersubunit bridge (bridge B4) with the 23S rRNA of the 50S subunit in the ribosome.</text>
</comment>
<comment type="subunit">
    <text evidence="2">Part of the 30S ribosomal subunit. Forms a bridge to the 50S subunit in the 70S ribosome, contacting the 23S rRNA.</text>
</comment>
<comment type="similarity">
    <text evidence="2">Belongs to the universal ribosomal protein uS15 family.</text>
</comment>
<keyword id="KW-0002">3D-structure</keyword>
<keyword id="KW-0687">Ribonucleoprotein</keyword>
<keyword id="KW-0689">Ribosomal protein</keyword>
<keyword id="KW-0694">RNA-binding</keyword>
<keyword id="KW-0699">rRNA-binding</keyword>
<name>RS15_THETH</name>
<feature type="initiator methionine" description="Removed" evidence="1">
    <location>
        <position position="1"/>
    </location>
</feature>
<feature type="chain" id="PRO_0000115572" description="Small ribosomal subunit protein uS15">
    <location>
        <begin position="2"/>
        <end position="89"/>
    </location>
</feature>
<feature type="helix" evidence="5">
    <location>
        <begin position="5"/>
        <end position="15"/>
    </location>
</feature>
<feature type="turn" evidence="4">
    <location>
        <begin position="19"/>
        <end position="22"/>
    </location>
</feature>
<feature type="helix" evidence="5">
    <location>
        <begin position="26"/>
        <end position="45"/>
    </location>
</feature>
<feature type="turn" evidence="5">
    <location>
        <begin position="46"/>
        <end position="48"/>
    </location>
</feature>
<feature type="helix" evidence="5">
    <location>
        <begin position="51"/>
        <end position="73"/>
    </location>
</feature>
<feature type="helix" evidence="5">
    <location>
        <begin position="75"/>
        <end position="81"/>
    </location>
</feature>
<feature type="turn" evidence="5">
    <location>
        <begin position="82"/>
        <end position="86"/>
    </location>
</feature>
<evidence type="ECO:0000250" key="1"/>
<evidence type="ECO:0000255" key="2">
    <source>
        <dbReference type="HAMAP-Rule" id="MF_01343"/>
    </source>
</evidence>
<evidence type="ECO:0000305" key="3"/>
<evidence type="ECO:0007829" key="4">
    <source>
        <dbReference type="PDB" id="1AB3"/>
    </source>
</evidence>
<evidence type="ECO:0007829" key="5">
    <source>
        <dbReference type="PDB" id="1DK1"/>
    </source>
</evidence>
<proteinExistence type="evidence at protein level"/>
<sequence>MPITKEEKQKVIQEFARFPGDTGSTEVQVALLTLRINRLSEHLKVHKKDHHSHRGLLMMVGQRRRLLRYLQREDPERYRALIEKLGIRG</sequence>
<dbReference type="EMBL" id="Z37726">
    <property type="protein sequence ID" value="CAA85782.1"/>
    <property type="molecule type" value="Genomic_DNA"/>
</dbReference>
<dbReference type="EMBL" id="Z84207">
    <property type="protein sequence ID" value="CAB06340.1"/>
    <property type="molecule type" value="Genomic_DNA"/>
</dbReference>
<dbReference type="RefSeq" id="WP_008632621.1">
    <property type="nucleotide sequence ID" value="NZ_VHHQ01000002.1"/>
</dbReference>
<dbReference type="PDB" id="1AB3">
    <property type="method" value="NMR"/>
    <property type="chains" value="A=2-89"/>
</dbReference>
<dbReference type="PDB" id="1DK1">
    <property type="method" value="X-ray"/>
    <property type="resolution" value="2.80 A"/>
    <property type="chains" value="A=2-87"/>
</dbReference>
<dbReference type="PDB" id="1F7Y">
    <property type="method" value="X-ray"/>
    <property type="resolution" value="2.80 A"/>
    <property type="chains" value="A=1-89"/>
</dbReference>
<dbReference type="PDB" id="1KUQ">
    <property type="method" value="X-ray"/>
    <property type="resolution" value="2.84 A"/>
    <property type="chains" value="A=1-87"/>
</dbReference>
<dbReference type="PDB" id="2FKX">
    <property type="method" value="NMR"/>
    <property type="chains" value="A=2-89"/>
</dbReference>
<dbReference type="PDB" id="4V49">
    <property type="method" value="X-ray"/>
    <property type="resolution" value="8.70 A"/>
    <property type="chains" value="O=2-89"/>
</dbReference>
<dbReference type="PDB" id="4V8X">
    <property type="method" value="X-ray"/>
    <property type="resolution" value="3.35 A"/>
    <property type="chains" value="AO/CO=1-89"/>
</dbReference>
<dbReference type="PDBsum" id="1AB3"/>
<dbReference type="PDBsum" id="1DK1"/>
<dbReference type="PDBsum" id="1F7Y"/>
<dbReference type="PDBsum" id="1KUQ"/>
<dbReference type="PDBsum" id="2FKX"/>
<dbReference type="PDBsum" id="4V49"/>
<dbReference type="PDBsum" id="4V8X"/>
<dbReference type="SMR" id="P80378"/>
<dbReference type="DIP" id="DIP-6174N"/>
<dbReference type="GeneID" id="3169463"/>
<dbReference type="OMA" id="RINYLTE"/>
<dbReference type="EvolutionaryTrace" id="P80378"/>
<dbReference type="GO" id="GO:0022627">
    <property type="term" value="C:cytosolic small ribosomal subunit"/>
    <property type="evidence" value="ECO:0007669"/>
    <property type="project" value="TreeGrafter"/>
</dbReference>
<dbReference type="GO" id="GO:0019843">
    <property type="term" value="F:rRNA binding"/>
    <property type="evidence" value="ECO:0007669"/>
    <property type="project" value="UniProtKB-UniRule"/>
</dbReference>
<dbReference type="GO" id="GO:0003735">
    <property type="term" value="F:structural constituent of ribosome"/>
    <property type="evidence" value="ECO:0007669"/>
    <property type="project" value="InterPro"/>
</dbReference>
<dbReference type="GO" id="GO:0006412">
    <property type="term" value="P:translation"/>
    <property type="evidence" value="ECO:0007669"/>
    <property type="project" value="UniProtKB-UniRule"/>
</dbReference>
<dbReference type="CDD" id="cd00353">
    <property type="entry name" value="Ribosomal_S15p_S13e"/>
    <property type="match status" value="1"/>
</dbReference>
<dbReference type="FunFam" id="1.10.287.10:FF:000002">
    <property type="entry name" value="30S ribosomal protein S15"/>
    <property type="match status" value="1"/>
</dbReference>
<dbReference type="Gene3D" id="6.10.250.3130">
    <property type="match status" value="1"/>
</dbReference>
<dbReference type="Gene3D" id="1.10.287.10">
    <property type="entry name" value="S15/NS1, RNA-binding"/>
    <property type="match status" value="1"/>
</dbReference>
<dbReference type="HAMAP" id="MF_01343_B">
    <property type="entry name" value="Ribosomal_uS15_B"/>
    <property type="match status" value="1"/>
</dbReference>
<dbReference type="InterPro" id="IPR000589">
    <property type="entry name" value="Ribosomal_uS15"/>
</dbReference>
<dbReference type="InterPro" id="IPR005290">
    <property type="entry name" value="Ribosomal_uS15_bac-type"/>
</dbReference>
<dbReference type="InterPro" id="IPR009068">
    <property type="entry name" value="uS15_NS1_RNA-bd_sf"/>
</dbReference>
<dbReference type="NCBIfam" id="TIGR00952">
    <property type="entry name" value="S15_bact"/>
    <property type="match status" value="1"/>
</dbReference>
<dbReference type="PANTHER" id="PTHR23321">
    <property type="entry name" value="RIBOSOMAL PROTEIN S15, BACTERIAL AND ORGANELLAR"/>
    <property type="match status" value="1"/>
</dbReference>
<dbReference type="PANTHER" id="PTHR23321:SF26">
    <property type="entry name" value="SMALL RIBOSOMAL SUBUNIT PROTEIN US15M"/>
    <property type="match status" value="1"/>
</dbReference>
<dbReference type="Pfam" id="PF00312">
    <property type="entry name" value="Ribosomal_S15"/>
    <property type="match status" value="1"/>
</dbReference>
<dbReference type="SMART" id="SM01387">
    <property type="entry name" value="Ribosomal_S15"/>
    <property type="match status" value="1"/>
</dbReference>
<dbReference type="SUPFAM" id="SSF47060">
    <property type="entry name" value="S15/NS1 RNA-binding domain"/>
    <property type="match status" value="1"/>
</dbReference>
<dbReference type="PROSITE" id="PS00362">
    <property type="entry name" value="RIBOSOMAL_S15"/>
    <property type="match status" value="1"/>
</dbReference>
<protein>
    <recommendedName>
        <fullName evidence="2">Small ribosomal subunit protein uS15</fullName>
    </recommendedName>
    <alternativeName>
        <fullName evidence="3">30S ribosomal protein S15</fullName>
    </alternativeName>
</protein>
<reference key="1">
    <citation type="journal article" date="1997" name="Eur. J. Biochem.">
        <title>Ribosomal protein S15 from Thermus thermophilus -- cloning, sequencing, overexpression of the gene and RNA-binding properties of the protein.</title>
        <authorList>
            <person name="Serganov A."/>
            <person name="Rak A."/>
            <person name="Garber M.B."/>
            <person name="Reinbolt J."/>
            <person name="Ehresmann B."/>
            <person name="Ehresmann C."/>
            <person name="Grunberg-Manago M."/>
            <person name="Portier C."/>
        </authorList>
    </citation>
    <scope>NUCLEOTIDE SEQUENCE [GENOMIC DNA]</scope>
    <source>
        <strain>VK1</strain>
    </source>
</reference>
<reference key="2">
    <citation type="submission" date="1997-01" db="EMBL/GenBank/DDBJ databases">
        <title>Polynucleotide phosphorylase from Thermus thermophilus: cloning, sequencing and expression of the gene and biochemical properties of the enzyme.</title>
        <authorList>
            <person name="Serganov A.A."/>
            <person name="Garber M.B."/>
            <person name="Portier C."/>
        </authorList>
    </citation>
    <scope>NUCLEOTIDE SEQUENCE [GENOMIC DNA]</scope>
    <source>
        <strain>VK1</strain>
    </source>
</reference>
<reference key="3">
    <citation type="journal article" date="1997" name="Nat. Struct. Biol.">
        <title>Solution structure of the ribosomal RNA binding protein S15 from Thermus thermophilus.</title>
        <authorList>
            <person name="Berglund H."/>
            <person name="Rak A."/>
            <person name="Serganov A."/>
            <person name="Garber M.B."/>
            <person name="Haerd T."/>
        </authorList>
    </citation>
    <scope>STRUCTURE BY NMR</scope>
</reference>
<reference key="4">
    <citation type="journal article" date="2000" name="J. Mol. Biol.">
        <title>The crystal structure of UUCG tetraloop.</title>
        <authorList>
            <person name="Ennifar E."/>
            <person name="Nikulin A."/>
            <person name="Tishchenko S."/>
            <person name="Serganov A."/>
            <person name="Nevskaya N."/>
            <person name="Garber M.B."/>
            <person name="Ehresmann B."/>
            <person name="Ehresmann C."/>
            <person name="Nikonov S."/>
            <person name="Dumas P."/>
        </authorList>
    </citation>
    <scope>X-RAY CRYSTALLOGRAPHY (2.8 ANGSTROMS)</scope>
    <source>
        <strain>VK1</strain>
    </source>
</reference>
<reference key="5">
    <citation type="journal article" date="2000" name="Nat. Struct. Biol.">
        <title>Crystal structure of the S15-rRNA complex.</title>
        <authorList>
            <person name="Nikulin A."/>
            <person name="Serganov A."/>
            <person name="Ennifar E."/>
            <person name="Tishchenko S."/>
            <person name="Nevskaya N."/>
            <person name="Shepard W."/>
            <person name="Portier C."/>
            <person name="Garber M.B."/>
            <person name="Ehresmann B."/>
            <person name="Ehresmann C."/>
            <person name="Nikonov S."/>
            <person name="Dumas P."/>
        </authorList>
    </citation>
    <scope>X-RAY CRYSTALLOGRAPHY (2.8 ANGSTROMS) OF S15 AND RRNA</scope>
    <source>
        <strain>VK1</strain>
    </source>
</reference>
<accession>P80378</accession>
<gene>
    <name evidence="2" type="primary">rpsO</name>
    <name evidence="2" type="synonym">rps15</name>
</gene>
<organism>
    <name type="scientific">Thermus thermophilus</name>
    <dbReference type="NCBI Taxonomy" id="274"/>
    <lineage>
        <taxon>Bacteria</taxon>
        <taxon>Thermotogati</taxon>
        <taxon>Deinococcota</taxon>
        <taxon>Deinococci</taxon>
        <taxon>Thermales</taxon>
        <taxon>Thermaceae</taxon>
        <taxon>Thermus</taxon>
    </lineage>
</organism>